<dbReference type="EC" id="2.1.2.3" evidence="1"/>
<dbReference type="EC" id="3.5.4.10" evidence="1"/>
<dbReference type="EMBL" id="CP000510">
    <property type="protein sequence ID" value="ABM04907.1"/>
    <property type="molecule type" value="Genomic_DNA"/>
</dbReference>
<dbReference type="RefSeq" id="WP_011771459.1">
    <property type="nucleotide sequence ID" value="NC_008709.1"/>
</dbReference>
<dbReference type="SMR" id="A1SZJ2"/>
<dbReference type="STRING" id="357804.Ping_3220"/>
<dbReference type="KEGG" id="pin:Ping_3220"/>
<dbReference type="eggNOG" id="COG0138">
    <property type="taxonomic scope" value="Bacteria"/>
</dbReference>
<dbReference type="HOGENOM" id="CLU_016316_5_2_6"/>
<dbReference type="OrthoDB" id="9802065at2"/>
<dbReference type="UniPathway" id="UPA00074">
    <property type="reaction ID" value="UER00133"/>
</dbReference>
<dbReference type="UniPathway" id="UPA00074">
    <property type="reaction ID" value="UER00135"/>
</dbReference>
<dbReference type="Proteomes" id="UP000000639">
    <property type="component" value="Chromosome"/>
</dbReference>
<dbReference type="GO" id="GO:0005829">
    <property type="term" value="C:cytosol"/>
    <property type="evidence" value="ECO:0007669"/>
    <property type="project" value="TreeGrafter"/>
</dbReference>
<dbReference type="GO" id="GO:0003937">
    <property type="term" value="F:IMP cyclohydrolase activity"/>
    <property type="evidence" value="ECO:0007669"/>
    <property type="project" value="UniProtKB-UniRule"/>
</dbReference>
<dbReference type="GO" id="GO:0004643">
    <property type="term" value="F:phosphoribosylaminoimidazolecarboxamide formyltransferase activity"/>
    <property type="evidence" value="ECO:0007669"/>
    <property type="project" value="UniProtKB-UniRule"/>
</dbReference>
<dbReference type="GO" id="GO:0006189">
    <property type="term" value="P:'de novo' IMP biosynthetic process"/>
    <property type="evidence" value="ECO:0007669"/>
    <property type="project" value="UniProtKB-UniRule"/>
</dbReference>
<dbReference type="CDD" id="cd01421">
    <property type="entry name" value="IMPCH"/>
    <property type="match status" value="1"/>
</dbReference>
<dbReference type="FunFam" id="3.40.140.20:FF:000001">
    <property type="entry name" value="Bifunctional purine biosynthesis protein PurH"/>
    <property type="match status" value="1"/>
</dbReference>
<dbReference type="FunFam" id="3.40.140.20:FF:000002">
    <property type="entry name" value="Bifunctional purine biosynthesis protein PurH"/>
    <property type="match status" value="1"/>
</dbReference>
<dbReference type="FunFam" id="3.40.50.1380:FF:000001">
    <property type="entry name" value="Bifunctional purine biosynthesis protein PurH"/>
    <property type="match status" value="1"/>
</dbReference>
<dbReference type="Gene3D" id="3.40.140.20">
    <property type="match status" value="2"/>
</dbReference>
<dbReference type="Gene3D" id="3.40.50.1380">
    <property type="entry name" value="Methylglyoxal synthase-like domain"/>
    <property type="match status" value="1"/>
</dbReference>
<dbReference type="HAMAP" id="MF_00139">
    <property type="entry name" value="PurH"/>
    <property type="match status" value="1"/>
</dbReference>
<dbReference type="InterPro" id="IPR024051">
    <property type="entry name" value="AICAR_Tfase_dup_dom_sf"/>
</dbReference>
<dbReference type="InterPro" id="IPR016193">
    <property type="entry name" value="Cytidine_deaminase-like"/>
</dbReference>
<dbReference type="InterPro" id="IPR011607">
    <property type="entry name" value="MGS-like_dom"/>
</dbReference>
<dbReference type="InterPro" id="IPR036914">
    <property type="entry name" value="MGS-like_dom_sf"/>
</dbReference>
<dbReference type="InterPro" id="IPR002695">
    <property type="entry name" value="PurH-like"/>
</dbReference>
<dbReference type="NCBIfam" id="NF002049">
    <property type="entry name" value="PRK00881.1"/>
    <property type="match status" value="1"/>
</dbReference>
<dbReference type="NCBIfam" id="TIGR00355">
    <property type="entry name" value="purH"/>
    <property type="match status" value="1"/>
</dbReference>
<dbReference type="PANTHER" id="PTHR11692:SF0">
    <property type="entry name" value="BIFUNCTIONAL PURINE BIOSYNTHESIS PROTEIN ATIC"/>
    <property type="match status" value="1"/>
</dbReference>
<dbReference type="PANTHER" id="PTHR11692">
    <property type="entry name" value="BIFUNCTIONAL PURINE BIOSYNTHESIS PROTEIN PURH"/>
    <property type="match status" value="1"/>
</dbReference>
<dbReference type="Pfam" id="PF01808">
    <property type="entry name" value="AICARFT_IMPCHas"/>
    <property type="match status" value="1"/>
</dbReference>
<dbReference type="Pfam" id="PF02142">
    <property type="entry name" value="MGS"/>
    <property type="match status" value="1"/>
</dbReference>
<dbReference type="PIRSF" id="PIRSF000414">
    <property type="entry name" value="AICARFT_IMPCHas"/>
    <property type="match status" value="1"/>
</dbReference>
<dbReference type="SMART" id="SM00798">
    <property type="entry name" value="AICARFT_IMPCHas"/>
    <property type="match status" value="1"/>
</dbReference>
<dbReference type="SMART" id="SM00851">
    <property type="entry name" value="MGS"/>
    <property type="match status" value="1"/>
</dbReference>
<dbReference type="SUPFAM" id="SSF53927">
    <property type="entry name" value="Cytidine deaminase-like"/>
    <property type="match status" value="1"/>
</dbReference>
<dbReference type="SUPFAM" id="SSF52335">
    <property type="entry name" value="Methylglyoxal synthase-like"/>
    <property type="match status" value="1"/>
</dbReference>
<dbReference type="PROSITE" id="PS51855">
    <property type="entry name" value="MGS"/>
    <property type="match status" value="1"/>
</dbReference>
<accession>A1SZJ2</accession>
<comment type="catalytic activity">
    <reaction evidence="1">
        <text>(6R)-10-formyltetrahydrofolate + 5-amino-1-(5-phospho-beta-D-ribosyl)imidazole-4-carboxamide = 5-formamido-1-(5-phospho-D-ribosyl)imidazole-4-carboxamide + (6S)-5,6,7,8-tetrahydrofolate</text>
        <dbReference type="Rhea" id="RHEA:22192"/>
        <dbReference type="ChEBI" id="CHEBI:57453"/>
        <dbReference type="ChEBI" id="CHEBI:58467"/>
        <dbReference type="ChEBI" id="CHEBI:58475"/>
        <dbReference type="ChEBI" id="CHEBI:195366"/>
        <dbReference type="EC" id="2.1.2.3"/>
    </reaction>
</comment>
<comment type="catalytic activity">
    <reaction evidence="1">
        <text>IMP + H2O = 5-formamido-1-(5-phospho-D-ribosyl)imidazole-4-carboxamide</text>
        <dbReference type="Rhea" id="RHEA:18445"/>
        <dbReference type="ChEBI" id="CHEBI:15377"/>
        <dbReference type="ChEBI" id="CHEBI:58053"/>
        <dbReference type="ChEBI" id="CHEBI:58467"/>
        <dbReference type="EC" id="3.5.4.10"/>
    </reaction>
</comment>
<comment type="pathway">
    <text evidence="1">Purine metabolism; IMP biosynthesis via de novo pathway; 5-formamido-1-(5-phospho-D-ribosyl)imidazole-4-carboxamide from 5-amino-1-(5-phospho-D-ribosyl)imidazole-4-carboxamide (10-formyl THF route): step 1/1.</text>
</comment>
<comment type="pathway">
    <text evidence="1">Purine metabolism; IMP biosynthesis via de novo pathway; IMP from 5-formamido-1-(5-phospho-D-ribosyl)imidazole-4-carboxamide: step 1/1.</text>
</comment>
<comment type="domain">
    <text evidence="1">The IMP cyclohydrolase activity resides in the N-terminal region.</text>
</comment>
<comment type="similarity">
    <text evidence="1">Belongs to the PurH family.</text>
</comment>
<protein>
    <recommendedName>
        <fullName evidence="1">Bifunctional purine biosynthesis protein PurH</fullName>
    </recommendedName>
    <domain>
        <recommendedName>
            <fullName evidence="1">Phosphoribosylaminoimidazolecarboxamide formyltransferase</fullName>
            <ecNumber evidence="1">2.1.2.3</ecNumber>
        </recommendedName>
        <alternativeName>
            <fullName evidence="1">AICAR transformylase</fullName>
        </alternativeName>
    </domain>
    <domain>
        <recommendedName>
            <fullName evidence="1">IMP cyclohydrolase</fullName>
            <ecNumber evidence="1">3.5.4.10</ecNumber>
        </recommendedName>
        <alternativeName>
            <fullName evidence="1">ATIC</fullName>
        </alternativeName>
        <alternativeName>
            <fullName evidence="1">IMP synthase</fullName>
        </alternativeName>
        <alternativeName>
            <fullName evidence="1">Inosinicase</fullName>
        </alternativeName>
    </domain>
</protein>
<gene>
    <name evidence="1" type="primary">purH</name>
    <name type="ordered locus">Ping_3220</name>
</gene>
<reference key="1">
    <citation type="journal article" date="2008" name="BMC Genomics">
        <title>Genomics of an extreme psychrophile, Psychromonas ingrahamii.</title>
        <authorList>
            <person name="Riley M."/>
            <person name="Staley J.T."/>
            <person name="Danchin A."/>
            <person name="Wang T.Z."/>
            <person name="Brettin T.S."/>
            <person name="Hauser L.J."/>
            <person name="Land M.L."/>
            <person name="Thompson L.S."/>
        </authorList>
    </citation>
    <scope>NUCLEOTIDE SEQUENCE [LARGE SCALE GENOMIC DNA]</scope>
    <source>
        <strain>DSM 17664 / CCUG 51855 / 37</strain>
    </source>
</reference>
<organism>
    <name type="scientific">Psychromonas ingrahamii (strain DSM 17664 / CCUG 51855 / 37)</name>
    <dbReference type="NCBI Taxonomy" id="357804"/>
    <lineage>
        <taxon>Bacteria</taxon>
        <taxon>Pseudomonadati</taxon>
        <taxon>Pseudomonadota</taxon>
        <taxon>Gammaproteobacteria</taxon>
        <taxon>Alteromonadales</taxon>
        <taxon>Psychromonadaceae</taxon>
        <taxon>Psychromonas</taxon>
    </lineage>
</organism>
<sequence>MENSRPIKRALLSVSDKAGIIEFAKELSARGVEILSTGGTCKLLAENDIKVTEVSDYTGFPEMMDGRVKTLHPKIHGGILARRGIDEVIMSENDIAPIDLVVVNLYPFAETVARPDCSLEDAIENIDIGGPTMVRAAAKNHKDVGIVVNAGDYPRVLKEMQENNNSLAYKTRFDLAIAAYEHTAQYDGMIANYFGTMVPSYGENSEGDLESKFPRTINMQFKKKQDMRYGENSHQSAAFYVEDDIQEASVSTATQLQGKALSYNNIADTDAALECVKEFSEPACVIVKHSNPCGVAVAGNILDAYEGAYKTDPTSAFGGIIAFNRELDAKTAEAIVSRQFVEVIIAPSVSPEAAKIVATKKNLRLLACGEWSDKTTQFDIKRVNGGLLVQDRDQGMVGLEDLKVVTKRQPTEAELKDLLFSWKVAKFVKSNAIVYVKNNATVGVGAGQMSRVYSAKVAGIKAADENLVVAGSVMSSDAFFPFRDGIDAAAEAGISCVIQPGGSMRDNEVIAAADEHGMAMVFTGMRHFRH</sequence>
<name>PUR9_PSYIN</name>
<proteinExistence type="inferred from homology"/>
<keyword id="KW-0378">Hydrolase</keyword>
<keyword id="KW-0511">Multifunctional enzyme</keyword>
<keyword id="KW-0658">Purine biosynthesis</keyword>
<keyword id="KW-1185">Reference proteome</keyword>
<keyword id="KW-0808">Transferase</keyword>
<evidence type="ECO:0000255" key="1">
    <source>
        <dbReference type="HAMAP-Rule" id="MF_00139"/>
    </source>
</evidence>
<evidence type="ECO:0000255" key="2">
    <source>
        <dbReference type="PROSITE-ProRule" id="PRU01202"/>
    </source>
</evidence>
<feature type="chain" id="PRO_1000018943" description="Bifunctional purine biosynthesis protein PurH">
    <location>
        <begin position="1"/>
        <end position="530"/>
    </location>
</feature>
<feature type="domain" description="MGS-like" evidence="2">
    <location>
        <begin position="1"/>
        <end position="148"/>
    </location>
</feature>